<organism>
    <name type="scientific">Streptococcus thermophilus (strain ATCC BAA-491 / LMD-9)</name>
    <dbReference type="NCBI Taxonomy" id="322159"/>
    <lineage>
        <taxon>Bacteria</taxon>
        <taxon>Bacillati</taxon>
        <taxon>Bacillota</taxon>
        <taxon>Bacilli</taxon>
        <taxon>Lactobacillales</taxon>
        <taxon>Streptococcaceae</taxon>
        <taxon>Streptococcus</taxon>
    </lineage>
</organism>
<comment type="function">
    <text evidence="1">This is one of the proteins that bind and probably mediate the attachment of the 5S RNA into the large ribosomal subunit, where it forms part of the central protuberance. In the 70S ribosome it contacts protein S13 of the 30S subunit (bridge B1b), connecting the 2 subunits; this bridge is implicated in subunit movement. Contacts the P site tRNA; the 5S rRNA and some of its associated proteins might help stabilize positioning of ribosome-bound tRNAs.</text>
</comment>
<comment type="subunit">
    <text evidence="1">Part of the 50S ribosomal subunit; part of the 5S rRNA/L5/L18/L25 subcomplex. Contacts the 5S rRNA and the P site tRNA. Forms a bridge to the 30S subunit in the 70S ribosome.</text>
</comment>
<comment type="similarity">
    <text evidence="1">Belongs to the universal ribosomal protein uL5 family.</text>
</comment>
<keyword id="KW-0687">Ribonucleoprotein</keyword>
<keyword id="KW-0689">Ribosomal protein</keyword>
<keyword id="KW-0694">RNA-binding</keyword>
<keyword id="KW-0699">rRNA-binding</keyword>
<keyword id="KW-0820">tRNA-binding</keyword>
<reference key="1">
    <citation type="journal article" date="2006" name="Proc. Natl. Acad. Sci. U.S.A.">
        <title>Comparative genomics of the lactic acid bacteria.</title>
        <authorList>
            <person name="Makarova K.S."/>
            <person name="Slesarev A."/>
            <person name="Wolf Y.I."/>
            <person name="Sorokin A."/>
            <person name="Mirkin B."/>
            <person name="Koonin E.V."/>
            <person name="Pavlov A."/>
            <person name="Pavlova N."/>
            <person name="Karamychev V."/>
            <person name="Polouchine N."/>
            <person name="Shakhova V."/>
            <person name="Grigoriev I."/>
            <person name="Lou Y."/>
            <person name="Rohksar D."/>
            <person name="Lucas S."/>
            <person name="Huang K."/>
            <person name="Goodstein D.M."/>
            <person name="Hawkins T."/>
            <person name="Plengvidhya V."/>
            <person name="Welker D."/>
            <person name="Hughes J."/>
            <person name="Goh Y."/>
            <person name="Benson A."/>
            <person name="Baldwin K."/>
            <person name="Lee J.-H."/>
            <person name="Diaz-Muniz I."/>
            <person name="Dosti B."/>
            <person name="Smeianov V."/>
            <person name="Wechter W."/>
            <person name="Barabote R."/>
            <person name="Lorca G."/>
            <person name="Altermann E."/>
            <person name="Barrangou R."/>
            <person name="Ganesan B."/>
            <person name="Xie Y."/>
            <person name="Rawsthorne H."/>
            <person name="Tamir D."/>
            <person name="Parker C."/>
            <person name="Breidt F."/>
            <person name="Broadbent J.R."/>
            <person name="Hutkins R."/>
            <person name="O'Sullivan D."/>
            <person name="Steele J."/>
            <person name="Unlu G."/>
            <person name="Saier M.H. Jr."/>
            <person name="Klaenhammer T."/>
            <person name="Richardson P."/>
            <person name="Kozyavkin S."/>
            <person name="Weimer B.C."/>
            <person name="Mills D.A."/>
        </authorList>
    </citation>
    <scope>NUCLEOTIDE SEQUENCE [LARGE SCALE GENOMIC DNA]</scope>
    <source>
        <strain>ATCC BAA-491 / LMD-9</strain>
    </source>
</reference>
<evidence type="ECO:0000255" key="1">
    <source>
        <dbReference type="HAMAP-Rule" id="MF_01333"/>
    </source>
</evidence>
<evidence type="ECO:0000305" key="2"/>
<feature type="chain" id="PRO_1000052847" description="Large ribosomal subunit protein uL5">
    <location>
        <begin position="1"/>
        <end position="180"/>
    </location>
</feature>
<gene>
    <name evidence="1" type="primary">rplE</name>
    <name type="ordered locus">STER_1895</name>
</gene>
<accession>Q03IG3</accession>
<sequence>MANRLKEKYTNEVIPALTEKFNYSSVMAVPKVDKIVINMGVGEAVNNAKTLEKAAAELALISGQKPLITKAKKSIAGFRLREGVAIGAKVTLRGERMYEFLDKLVSVSLPRVRDFHGVPTKSFDGRGNYTLGVKEQLIFPEINFDDVDKVRGMDIVIVTTANTDEEGRELLKGLGMPFAK</sequence>
<protein>
    <recommendedName>
        <fullName evidence="1">Large ribosomal subunit protein uL5</fullName>
    </recommendedName>
    <alternativeName>
        <fullName evidence="2">50S ribosomal protein L5</fullName>
    </alternativeName>
</protein>
<proteinExistence type="inferred from homology"/>
<dbReference type="EMBL" id="CP000419">
    <property type="protein sequence ID" value="ABJ67009.1"/>
    <property type="molecule type" value="Genomic_DNA"/>
</dbReference>
<dbReference type="RefSeq" id="WP_002887058.1">
    <property type="nucleotide sequence ID" value="NC_008532.1"/>
</dbReference>
<dbReference type="SMR" id="Q03IG3"/>
<dbReference type="GeneID" id="93793074"/>
<dbReference type="KEGG" id="ste:STER_1895"/>
<dbReference type="HOGENOM" id="CLU_061015_2_1_9"/>
<dbReference type="GO" id="GO:1990904">
    <property type="term" value="C:ribonucleoprotein complex"/>
    <property type="evidence" value="ECO:0007669"/>
    <property type="project" value="UniProtKB-KW"/>
</dbReference>
<dbReference type="GO" id="GO:0005840">
    <property type="term" value="C:ribosome"/>
    <property type="evidence" value="ECO:0007669"/>
    <property type="project" value="UniProtKB-KW"/>
</dbReference>
<dbReference type="GO" id="GO:0019843">
    <property type="term" value="F:rRNA binding"/>
    <property type="evidence" value="ECO:0007669"/>
    <property type="project" value="UniProtKB-UniRule"/>
</dbReference>
<dbReference type="GO" id="GO:0003735">
    <property type="term" value="F:structural constituent of ribosome"/>
    <property type="evidence" value="ECO:0007669"/>
    <property type="project" value="InterPro"/>
</dbReference>
<dbReference type="GO" id="GO:0000049">
    <property type="term" value="F:tRNA binding"/>
    <property type="evidence" value="ECO:0007669"/>
    <property type="project" value="UniProtKB-UniRule"/>
</dbReference>
<dbReference type="GO" id="GO:0006412">
    <property type="term" value="P:translation"/>
    <property type="evidence" value="ECO:0007669"/>
    <property type="project" value="UniProtKB-UniRule"/>
</dbReference>
<dbReference type="FunFam" id="3.30.1440.10:FF:000001">
    <property type="entry name" value="50S ribosomal protein L5"/>
    <property type="match status" value="1"/>
</dbReference>
<dbReference type="Gene3D" id="3.30.1440.10">
    <property type="match status" value="1"/>
</dbReference>
<dbReference type="HAMAP" id="MF_01333_B">
    <property type="entry name" value="Ribosomal_uL5_B"/>
    <property type="match status" value="1"/>
</dbReference>
<dbReference type="InterPro" id="IPR002132">
    <property type="entry name" value="Ribosomal_uL5"/>
</dbReference>
<dbReference type="InterPro" id="IPR020930">
    <property type="entry name" value="Ribosomal_uL5_bac-type"/>
</dbReference>
<dbReference type="InterPro" id="IPR031309">
    <property type="entry name" value="Ribosomal_uL5_C"/>
</dbReference>
<dbReference type="InterPro" id="IPR020929">
    <property type="entry name" value="Ribosomal_uL5_CS"/>
</dbReference>
<dbReference type="InterPro" id="IPR022803">
    <property type="entry name" value="Ribosomal_uL5_dom_sf"/>
</dbReference>
<dbReference type="InterPro" id="IPR031310">
    <property type="entry name" value="Ribosomal_uL5_N"/>
</dbReference>
<dbReference type="NCBIfam" id="NF000585">
    <property type="entry name" value="PRK00010.1"/>
    <property type="match status" value="1"/>
</dbReference>
<dbReference type="PANTHER" id="PTHR11994">
    <property type="entry name" value="60S RIBOSOMAL PROTEIN L11-RELATED"/>
    <property type="match status" value="1"/>
</dbReference>
<dbReference type="Pfam" id="PF00281">
    <property type="entry name" value="Ribosomal_L5"/>
    <property type="match status" value="1"/>
</dbReference>
<dbReference type="Pfam" id="PF00673">
    <property type="entry name" value="Ribosomal_L5_C"/>
    <property type="match status" value="1"/>
</dbReference>
<dbReference type="PIRSF" id="PIRSF002161">
    <property type="entry name" value="Ribosomal_L5"/>
    <property type="match status" value="1"/>
</dbReference>
<dbReference type="SUPFAM" id="SSF55282">
    <property type="entry name" value="RL5-like"/>
    <property type="match status" value="1"/>
</dbReference>
<dbReference type="PROSITE" id="PS00358">
    <property type="entry name" value="RIBOSOMAL_L5"/>
    <property type="match status" value="1"/>
</dbReference>
<name>RL5_STRTD</name>